<organism>
    <name type="scientific">Mus musculus</name>
    <name type="common">Mouse</name>
    <dbReference type="NCBI Taxonomy" id="10090"/>
    <lineage>
        <taxon>Eukaryota</taxon>
        <taxon>Metazoa</taxon>
        <taxon>Chordata</taxon>
        <taxon>Craniata</taxon>
        <taxon>Vertebrata</taxon>
        <taxon>Euteleostomi</taxon>
        <taxon>Mammalia</taxon>
        <taxon>Eutheria</taxon>
        <taxon>Euarchontoglires</taxon>
        <taxon>Glires</taxon>
        <taxon>Rodentia</taxon>
        <taxon>Myomorpha</taxon>
        <taxon>Muroidea</taxon>
        <taxon>Muridae</taxon>
        <taxon>Murinae</taxon>
        <taxon>Mus</taxon>
        <taxon>Mus</taxon>
    </lineage>
</organism>
<protein>
    <recommendedName>
        <fullName>Plexin-A2</fullName>
        <shortName>Plex 2</shortName>
        <shortName>Plexin-2</shortName>
    </recommendedName>
</protein>
<name>PLXA2_MOUSE</name>
<keyword id="KW-0002">3D-structure</keyword>
<keyword id="KW-1003">Cell membrane</keyword>
<keyword id="KW-0175">Coiled coil</keyword>
<keyword id="KW-1015">Disulfide bond</keyword>
<keyword id="KW-0325">Glycoprotein</keyword>
<keyword id="KW-0472">Membrane</keyword>
<keyword id="KW-0597">Phosphoprotein</keyword>
<keyword id="KW-1185">Reference proteome</keyword>
<keyword id="KW-0677">Repeat</keyword>
<keyword id="KW-0732">Signal</keyword>
<keyword id="KW-0812">Transmembrane</keyword>
<keyword id="KW-1133">Transmembrane helix</keyword>
<reference key="1">
    <citation type="journal article" date="1996" name="Biochem. Biophys. Res. Commun.">
        <title>Identification of plexin family molecules in mice.</title>
        <authorList>
            <person name="Kameyama T."/>
            <person name="Murakami Y."/>
            <person name="Suto F."/>
            <person name="Kawakami A."/>
            <person name="Takagi S."/>
            <person name="Hirata T."/>
            <person name="Fujisawa H."/>
        </authorList>
    </citation>
    <scope>NUCLEOTIDE SEQUENCE [MRNA]</scope>
    <source>
        <tissue>Brain</tissue>
    </source>
</reference>
<reference key="2">
    <citation type="journal article" date="2004" name="Genome Res.">
        <title>The status, quality, and expansion of the NIH full-length cDNA project: the Mammalian Gene Collection (MGC).</title>
        <authorList>
            <consortium name="The MGC Project Team"/>
        </authorList>
    </citation>
    <scope>NUCLEOTIDE SEQUENCE [LARGE SCALE MRNA]</scope>
    <source>
        <strain>C57BL/6J</strain>
        <tissue>Brain</tissue>
        <tissue>Colon</tissue>
    </source>
</reference>
<reference key="3">
    <citation type="journal article" date="2003" name="DNA Res.">
        <title>Prediction of the coding sequences of mouse homologues of KIAA gene: II. The complete nucleotide sequences of 400 mouse KIAA-homologous cDNAs identified by screening of terminal sequences of cDNA clones randomly sampled from size-fractionated libraries.</title>
        <authorList>
            <person name="Okazaki N."/>
            <person name="Kikuno R."/>
            <person name="Ohara R."/>
            <person name="Inamoto S."/>
            <person name="Aizawa H."/>
            <person name="Yuasa S."/>
            <person name="Nakajima D."/>
            <person name="Nagase T."/>
            <person name="Ohara O."/>
            <person name="Koga H."/>
        </authorList>
    </citation>
    <scope>NUCLEOTIDE SEQUENCE [LARGE SCALE MRNA] OF 366-1894</scope>
    <source>
        <tissue>Brain</tissue>
    </source>
</reference>
<reference key="4">
    <citation type="journal article" date="1999" name="Cell">
        <title>Plexin-neuropilin-1 complexes form functional semaphorin-3A receptors.</title>
        <authorList>
            <person name="Takahashi T."/>
            <person name="Fournier A."/>
            <person name="Nakamura F."/>
            <person name="Wang L.-H."/>
            <person name="Murakami Y."/>
            <person name="Kalb R.G."/>
            <person name="Fujisawa H."/>
            <person name="Strittmatter S.M."/>
        </authorList>
    </citation>
    <scope>FUNCTION</scope>
    <scope>INTERACTION WITH NRP1 AND SEMA3A</scope>
</reference>
<reference key="5">
    <citation type="journal article" date="2000" name="Mech. Dev.">
        <title>Plexin/neuropilin complexes mediate repulsion by the axonal guidance signal semaphorin 3A.</title>
        <authorList>
            <person name="Rohm B."/>
            <person name="Ottemeyer A."/>
            <person name="Lohrum M."/>
            <person name="Pueschel A.W."/>
        </authorList>
    </citation>
    <scope>FUNCTION</scope>
    <scope>INTERACTION WITH NRP1; NRP2 AND SEMA3A</scope>
</reference>
<reference key="6">
    <citation type="journal article" date="2010" name="Cell">
        <title>A tissue-specific atlas of mouse protein phosphorylation and expression.</title>
        <authorList>
            <person name="Huttlin E.L."/>
            <person name="Jedrychowski M.P."/>
            <person name="Elias J.E."/>
            <person name="Goswami T."/>
            <person name="Rad R."/>
            <person name="Beausoleil S.A."/>
            <person name="Villen J."/>
            <person name="Haas W."/>
            <person name="Sowa M.E."/>
            <person name="Gygi S.P."/>
        </authorList>
    </citation>
    <scope>IDENTIFICATION BY MASS SPECTROMETRY [LARGE SCALE ANALYSIS]</scope>
    <source>
        <tissue>Brain</tissue>
    </source>
</reference>
<reference key="7">
    <citation type="journal article" date="2010" name="Nature">
        <title>Structural basis of semaphorin-plexin signalling.</title>
        <authorList>
            <person name="Janssen B.J."/>
            <person name="Robinson R.A."/>
            <person name="Perez-Branguli F."/>
            <person name="Bell C.H."/>
            <person name="Mitchell K.J."/>
            <person name="Siebold C."/>
            <person name="Jones E.Y."/>
        </authorList>
    </citation>
    <scope>X-RAY CRYSTALLOGRAPHY (2.2 ANGSTROMS) OF 35-701 IN COMPLEX WITH SEMA6A</scope>
    <scope>INTERACTION WITH SEMA6A</scope>
    <scope>FUNCTION</scope>
    <scope>SUBCELLULAR LOCATION</scope>
    <scope>GLYCOSYLATION AT ASN-76; ASN-163; ASN-327 AND ASN-598</scope>
    <scope>MUTAGENESIS OF PHE-221 AND ALA-396</scope>
    <scope>DISULFIDE BONDS</scope>
</reference>
<reference key="8">
    <citation type="journal article" date="2010" name="Nature">
        <title>Structural basis for semaphorin signalling through the plexin receptor.</title>
        <authorList>
            <person name="Nogi T."/>
            <person name="Yasui N."/>
            <person name="Mihara E."/>
            <person name="Matsunaga Y."/>
            <person name="Noda M."/>
            <person name="Yamashita N."/>
            <person name="Toyofuku T."/>
            <person name="Uchiyama S."/>
            <person name="Goshima Y."/>
            <person name="Kumanogoh A."/>
            <person name="Takagi J."/>
        </authorList>
    </citation>
    <scope>X-RAY CRYSTALLOGRAPHY (2.1 ANGSTROMS) OF 31-561 IN COMPLEX WITH SEMA6A</scope>
    <scope>INTERACTION WITH SEMA6A</scope>
    <scope>SUBUNIT</scope>
    <scope>SUBCELLULAR LOCATION</scope>
    <scope>GLYCOSYLATION AT ASN-76</scope>
    <scope>MUTAGENESIS OF ASP-193; PHE-221 AND ALA-396</scope>
    <scope>DISULFIDE BONDS</scope>
</reference>
<sequence>MEQRRFYLRAMQADNLSVVLLSVAWLLLARGTTGMPQYSTFHSENRDWTFNHLTVHRRTGAVYVGAINRVYKLTGNLTIQVAHKTGPEEDNKACYPPLIVQPCSEVLTLTNNVNKLLIIDYSENRLLACGSLYQGVCKLLRLDDLFILVEPSHKKEHYLSSVNKTGTMYGVIVRSEGEDGKLFIGTAVDGKQDYFPTLSSRKLPRDPESSAMLDYELHSDFVSSLIKIPSDTLALVSHFDIFYIYGFASGGFVYFLTVQPETPDGMAINSAGDLFYTSRIVRLCKDDPKFHSYVSLPFGCTRAGVEYRLLQAAYLAKPGEALAQAFNISSDEDVLFAIFSKGQKQYHHPPDDSALCAFPIRAINLQIKERLQSCYHGEGNLELNWLLGKDVQCTKAPVPIDDNFCGLDINQPLGGSTPVEGLTLYTTSRDRLTSVASYVYNGYSVVFVGTKSGKLKKIRADGPPHGGVQYEMVSVFKDGSPILRDMAFSINQLYLYVMSERQVTRVPVESCEQYTTCGECLSSGDPHCGWCALHNMCSRRDKCQRAWEANRFAASISQCMSLEVHPNSISVSDHSRLLSLVVNDAPNLSEGIACAFGNLTEVEGQVSGSQVICISPGPKDVPVIPLDQDWFGLELQLRSKETGKIFVSTEFKFYNCSAHQLCLSCVNSAFRCHWCKYRNLCTHDPTTCSFQEGRINVSEDCPQLVPTEEILIPVGEVKPITLKARNLPQPQSGQRGYECVLSIQGAVHRVPALRFNSSSVQCQNSSYQYDGMDISNLAVDFAVVWNGNFIIDNPQDLKVHLYKCAAQRESCGLCLKADHKFECGWCSGERRCTLHQHCPSTSSPWLDWSSHNVKCSNPQITEILTVSGPPEGGTRVTIHGVNLGLDFSEIAHHVQVAGVPCTPIPGEYIIAEQIVCEMGHAVIGTTSGPVRLCIGECKPEFMTKSHQQYTFVNPSVLSLSPIRGPESGGTMVTITGHYLGAGSSVAVYLGNQTCEFYGRSMNEIVCVSPPSSNGLGPVPVSVSVDRARVDSSLQFEYIDDPRVQRIEPEWSITSGHTPLTITGFNLDVIQEPRVRVKFNGKESVNVCTVVNTTTLTCLAPSLTSDYRPGLDTVERPDEFGFLFNNVQSLLIYNDTKFIYYPNPTFELLSPTGILDQKPGSPIILKGKNLCPPASGGAKLNYTVMIGETPCTVTVSETQLLCEPPNLTGQHKVMVHVGGMVFSPGSVSVISDSLLTLPAIISIAAGGSLLLIIVIIVLIAYKRKSRENDLTLKRLQMQMDNLESRVALECKEAFAELQTDINELTSDLDRSGIPYLDYRTYAMRVLFPGIEDHPVLRELEVQGNGQQHVEKALKLFAQLINNKVFLLTFIRTLELQRSFSMRDRGNVASLIMTGLQGRLEYATDVLKQLLSDLIDKNLENKNHPKLLLRRTESVAEKMLTNWFAFLLHKFLKECAGEPLFMLYCAIKQQMEKGPIDAITGEARYSLSEDKLIRQQIEYKTLILNCVNPDNENSPEIPVKVLNCDTITQVKEKILDAVYKNVPYSQRPRAVDMDLEWRQGRIARVVLQDEDITTKIEGDWKRLNTLMHYQVSDRSVVALVPKQTSSYNIPASASISRTSISRYDSSFRYTGSPDSLRSRVPMITPDLESGVKVWHLVKNHDHGDQKEGDRGSKMVSEIYLTRLLATKGTLQKFVDDLFETLFSTVHRGSALPLAIKYMFDFLDEQADRHSIHDTDVRHTWKSNCLPLRFWVNVIKNPQFVFDIHKGSITDACLSVVAQTFMDSCSTSEHRLGKDSPSNKLLYAKDIPSYKNWVERYYADIAKLPAISDQDMNAYLAEQSRLHATEFNMLSALNEIYSYVSKYSEELIGALEQDEQARRQRLAYKVEHLINAMSIES</sequence>
<gene>
    <name type="primary">Plxna2</name>
    <name type="synonym">Kiaa0463</name>
</gene>
<proteinExistence type="evidence at protein level"/>
<evidence type="ECO:0000250" key="1"/>
<evidence type="ECO:0000250" key="2">
    <source>
        <dbReference type="UniProtKB" id="O75051"/>
    </source>
</evidence>
<evidence type="ECO:0000255" key="3"/>
<evidence type="ECO:0000255" key="4">
    <source>
        <dbReference type="PROSITE-ProRule" id="PRU00352"/>
    </source>
</evidence>
<evidence type="ECO:0000269" key="5">
    <source>
    </source>
</evidence>
<evidence type="ECO:0000269" key="6">
    <source>
    </source>
</evidence>
<evidence type="ECO:0000269" key="7">
    <source>
    </source>
</evidence>
<evidence type="ECO:0000269" key="8">
    <source>
    </source>
</evidence>
<evidence type="ECO:0000305" key="9"/>
<evidence type="ECO:0007829" key="10">
    <source>
        <dbReference type="PDB" id="3AL9"/>
    </source>
</evidence>
<evidence type="ECO:0007829" key="11">
    <source>
        <dbReference type="PDB" id="3OKT"/>
    </source>
</evidence>
<evidence type="ECO:0007829" key="12">
    <source>
        <dbReference type="PDB" id="3OKY"/>
    </source>
</evidence>
<evidence type="ECO:0007829" key="13">
    <source>
        <dbReference type="PDB" id="5L74"/>
    </source>
</evidence>
<comment type="function">
    <text evidence="5 6 7">Coreceptor for SEMA3A and SEMA6A. Necessary for signaling by SEMA6A and class 3 semaphorins and subsequent remodeling of the cytoskeleton. Plays a role in axon guidance, invasive growth and cell migration. Class 3 semaphorins bind to a complex composed of a neuropilin and a plexin. The plexin modulates the affinity of the complex for specific semaphorins, and its cytoplasmic domain is required for the activation of down-stream signaling events in the cytoplasm.</text>
</comment>
<comment type="subunit">
    <text evidence="1 5 6 7 8">Homodimer. Interacts with RND1 (By similarity). Interacts directly with NRP1 and NRP2. The PLXNA2 homodimer interacts with a SEMA6A homodimer, giving rise to a heterotetramer.</text>
</comment>
<comment type="interaction">
    <interactant intactId="EBI-771272">
        <id>P70207</id>
    </interactant>
    <interactant intactId="EBI-1555129">
        <id>P97333</id>
        <label>Nrp1</label>
    </interactant>
    <organismsDiffer>false</organismsDiffer>
    <experiments>3</experiments>
</comment>
<comment type="interaction">
    <interactant intactId="EBI-771272">
        <id>P70207</id>
    </interactant>
    <interactant intactId="EBI-771272">
        <id>P70207</id>
        <label>Plxna2</label>
    </interactant>
    <organismsDiffer>false</organismsDiffer>
    <experiments>4</experiments>
</comment>
<comment type="interaction">
    <interactant intactId="EBI-771272">
        <id>P70207</id>
    </interactant>
    <interactant intactId="EBI-15880936">
        <id>O35464-1</id>
        <label>Sema6a</label>
    </interactant>
    <organismsDiffer>false</organismsDiffer>
    <experiments>5</experiments>
</comment>
<comment type="subcellular location">
    <subcellularLocation>
        <location evidence="7 8">Cell membrane</location>
        <topology evidence="7 8">Single-pass type I membrane protein</topology>
    </subcellularLocation>
</comment>
<comment type="similarity">
    <text evidence="9">Belongs to the plexin family.</text>
</comment>
<comment type="sequence caution" evidence="9">
    <conflict type="erroneous initiation">
        <sequence resource="EMBL-CDS" id="AAH68155"/>
    </conflict>
    <text>Truncated N-terminus.</text>
</comment>
<comment type="sequence caution" evidence="9">
    <conflict type="erroneous initiation">
        <sequence resource="EMBL-CDS" id="BAA13189"/>
    </conflict>
    <text>Truncated N-terminus.</text>
</comment>
<feature type="signal peptide" evidence="3">
    <location>
        <begin position="1"/>
        <end position="34"/>
    </location>
</feature>
<feature type="chain" id="PRO_0000232748" description="Plexin-A2">
    <location>
        <begin position="35"/>
        <end position="1894"/>
    </location>
</feature>
<feature type="topological domain" description="Extracellular" evidence="3">
    <location>
        <begin position="35"/>
        <end position="1237"/>
    </location>
</feature>
<feature type="transmembrane region" description="Helical" evidence="3">
    <location>
        <begin position="1238"/>
        <end position="1258"/>
    </location>
</feature>
<feature type="topological domain" description="Cytoplasmic" evidence="3">
    <location>
        <begin position="1259"/>
        <end position="1894"/>
    </location>
</feature>
<feature type="domain" description="Sema" evidence="4">
    <location>
        <begin position="35"/>
        <end position="508"/>
    </location>
</feature>
<feature type="domain" description="IPT/TIG 1">
    <location>
        <begin position="858"/>
        <end position="951"/>
    </location>
</feature>
<feature type="domain" description="IPT/TIG 2">
    <location>
        <begin position="954"/>
        <end position="1037"/>
    </location>
</feature>
<feature type="domain" description="IPT/TIG 3">
    <location>
        <begin position="1041"/>
        <end position="1139"/>
    </location>
</feature>
<feature type="domain" description="IPT/TIG 4">
    <location>
        <begin position="1143"/>
        <end position="1228"/>
    </location>
</feature>
<feature type="coiled-coil region" evidence="3">
    <location>
        <begin position="1261"/>
        <end position="1310"/>
    </location>
</feature>
<feature type="modified residue" description="Phosphoserine" evidence="2">
    <location>
        <position position="1612"/>
    </location>
</feature>
<feature type="glycosylation site" description="N-linked (GlcNAc...) asparagine" evidence="3">
    <location>
        <position position="15"/>
    </location>
</feature>
<feature type="glycosylation site" description="N-linked (GlcNAc...) asparagine" evidence="7 8">
    <location>
        <position position="76"/>
    </location>
</feature>
<feature type="glycosylation site" description="N-linked (GlcNAc...) asparagine" evidence="7">
    <location>
        <position position="163"/>
    </location>
</feature>
<feature type="glycosylation site" description="N-linked (GlcNAc...) asparagine" evidence="7">
    <location>
        <position position="327"/>
    </location>
</feature>
<feature type="glycosylation site" description="N-linked (GlcNAc...) asparagine" evidence="7">
    <location>
        <position position="598"/>
    </location>
</feature>
<feature type="glycosylation site" description="N-linked (GlcNAc...) asparagine" evidence="3">
    <location>
        <position position="696"/>
    </location>
</feature>
<feature type="glycosylation site" description="N-linked (GlcNAc...) asparagine" evidence="3">
    <location>
        <position position="756"/>
    </location>
</feature>
<feature type="glycosylation site" description="N-linked (GlcNAc...) asparagine" evidence="3">
    <location>
        <position position="1180"/>
    </location>
</feature>
<feature type="glycosylation site" description="N-linked (GlcNAc...) asparagine" evidence="3">
    <location>
        <position position="1205"/>
    </location>
</feature>
<feature type="disulfide bond">
    <location>
        <begin position="94"/>
        <end position="103"/>
    </location>
</feature>
<feature type="disulfide bond">
    <location>
        <begin position="129"/>
        <end position="137"/>
    </location>
</feature>
<feature type="disulfide bond">
    <location>
        <begin position="284"/>
        <end position="405"/>
    </location>
</feature>
<feature type="disulfide bond">
    <location>
        <begin position="300"/>
        <end position="356"/>
    </location>
</feature>
<feature type="disulfide bond">
    <location>
        <begin position="374"/>
        <end position="393"/>
    </location>
</feature>
<feature type="disulfide bond">
    <location>
        <begin position="511"/>
        <end position="528"/>
    </location>
</feature>
<feature type="disulfide bond">
    <location>
        <begin position="517"/>
        <end position="559"/>
    </location>
</feature>
<feature type="disulfide bond">
    <location>
        <begin position="520"/>
        <end position="537"/>
    </location>
</feature>
<feature type="disulfide bond">
    <location>
        <begin position="531"/>
        <end position="543"/>
    </location>
</feature>
<feature type="disulfide bond">
    <location>
        <begin position="594"/>
        <end position="613"/>
    </location>
</feature>
<feature type="mutagenesis site" description="Abolishes interaction with SEMA6A." evidence="8">
    <original>D</original>
    <variation>K</variation>
    <location>
        <position position="193"/>
    </location>
</feature>
<feature type="mutagenesis site" description="Abolishes interaction with SEMA6A." evidence="7 8">
    <original>F</original>
    <variation>A</variation>
    <variation>R</variation>
    <location>
        <position position="221"/>
    </location>
</feature>
<feature type="mutagenesis site" description="Abolishes interaction with SEMA6A." evidence="7 8">
    <original>A</original>
    <variation>E</variation>
    <location>
        <position position="396"/>
    </location>
</feature>
<feature type="sequence conflict" description="In Ref. 2; AAH68155." evidence="9" ref="2">
    <original>A</original>
    <variation>P</variation>
    <location>
        <position position="211"/>
    </location>
</feature>
<feature type="strand" evidence="10">
    <location>
        <begin position="40"/>
        <end position="42"/>
    </location>
</feature>
<feature type="strand" evidence="10">
    <location>
        <begin position="44"/>
        <end position="48"/>
    </location>
</feature>
<feature type="strand" evidence="10">
    <location>
        <begin position="50"/>
        <end position="55"/>
    </location>
</feature>
<feature type="turn" evidence="10">
    <location>
        <begin position="57"/>
        <end position="59"/>
    </location>
</feature>
<feature type="strand" evidence="10">
    <location>
        <begin position="62"/>
        <end position="66"/>
    </location>
</feature>
<feature type="strand" evidence="10">
    <location>
        <begin position="69"/>
        <end position="73"/>
    </location>
</feature>
<feature type="strand" evidence="10">
    <location>
        <begin position="79"/>
        <end position="84"/>
    </location>
</feature>
<feature type="strand" evidence="10">
    <location>
        <begin position="88"/>
        <end position="90"/>
    </location>
</feature>
<feature type="turn" evidence="10">
    <location>
        <begin position="98"/>
        <end position="100"/>
    </location>
</feature>
<feature type="strand" evidence="10">
    <location>
        <begin position="108"/>
        <end position="110"/>
    </location>
</feature>
<feature type="strand" evidence="10">
    <location>
        <begin position="114"/>
        <end position="120"/>
    </location>
</feature>
<feature type="helix" evidence="10">
    <location>
        <begin position="121"/>
        <end position="123"/>
    </location>
</feature>
<feature type="strand" evidence="10">
    <location>
        <begin position="125"/>
        <end position="132"/>
    </location>
</feature>
<feature type="turn" evidence="10">
    <location>
        <begin position="133"/>
        <end position="135"/>
    </location>
</feature>
<feature type="strand" evidence="10">
    <location>
        <begin position="137"/>
        <end position="141"/>
    </location>
</feature>
<feature type="turn" evidence="10">
    <location>
        <begin position="142"/>
        <end position="144"/>
    </location>
</feature>
<feature type="strand" evidence="10">
    <location>
        <begin position="147"/>
        <end position="149"/>
    </location>
</feature>
<feature type="helix" evidence="10">
    <location>
        <begin position="155"/>
        <end position="157"/>
    </location>
</feature>
<feature type="strand" evidence="10">
    <location>
        <begin position="165"/>
        <end position="173"/>
    </location>
</feature>
<feature type="strand" evidence="11">
    <location>
        <begin position="176"/>
        <end position="178"/>
    </location>
</feature>
<feature type="strand" evidence="10">
    <location>
        <begin position="180"/>
        <end position="186"/>
    </location>
</feature>
<feature type="turn" evidence="10">
    <location>
        <begin position="192"/>
        <end position="194"/>
    </location>
</feature>
<feature type="strand" evidence="10">
    <location>
        <begin position="197"/>
        <end position="203"/>
    </location>
</feature>
<feature type="turn" evidence="10">
    <location>
        <begin position="210"/>
        <end position="213"/>
    </location>
</feature>
<feature type="strand" evidence="10">
    <location>
        <begin position="215"/>
        <end position="218"/>
    </location>
</feature>
<feature type="strand" evidence="10">
    <location>
        <begin position="223"/>
        <end position="226"/>
    </location>
</feature>
<feature type="helix" evidence="10">
    <location>
        <begin position="230"/>
        <end position="235"/>
    </location>
</feature>
<feature type="strand" evidence="10">
    <location>
        <begin position="242"/>
        <end position="249"/>
    </location>
</feature>
<feature type="strand" evidence="10">
    <location>
        <begin position="252"/>
        <end position="260"/>
    </location>
</feature>
<feature type="strand" evidence="10">
    <location>
        <begin position="275"/>
        <end position="286"/>
    </location>
</feature>
<feature type="strand" evidence="10">
    <location>
        <begin position="294"/>
        <end position="302"/>
    </location>
</feature>
<feature type="strand" evidence="10">
    <location>
        <begin position="305"/>
        <end position="316"/>
    </location>
</feature>
<feature type="helix" evidence="10">
    <location>
        <begin position="320"/>
        <end position="326"/>
    </location>
</feature>
<feature type="strand" evidence="10">
    <location>
        <begin position="334"/>
        <end position="344"/>
    </location>
</feature>
<feature type="strand" evidence="10">
    <location>
        <begin position="346"/>
        <end position="348"/>
    </location>
</feature>
<feature type="strand" evidence="10">
    <location>
        <begin position="353"/>
        <end position="359"/>
    </location>
</feature>
<feature type="helix" evidence="10">
    <location>
        <begin position="360"/>
        <end position="375"/>
    </location>
</feature>
<feature type="helix" evidence="10">
    <location>
        <begin position="384"/>
        <end position="387"/>
    </location>
</feature>
<feature type="strand" evidence="10">
    <location>
        <begin position="408"/>
        <end position="410"/>
    </location>
</feature>
<feature type="strand" evidence="10">
    <location>
        <begin position="422"/>
        <end position="430"/>
    </location>
</feature>
<feature type="strand" evidence="10">
    <location>
        <begin position="432"/>
        <end position="440"/>
    </location>
</feature>
<feature type="strand" evidence="10">
    <location>
        <begin position="443"/>
        <end position="450"/>
    </location>
</feature>
<feature type="strand" evidence="10">
    <location>
        <begin position="453"/>
        <end position="462"/>
    </location>
</feature>
<feature type="turn" evidence="10">
    <location>
        <begin position="463"/>
        <end position="465"/>
    </location>
</feature>
<feature type="strand" evidence="10">
    <location>
        <begin position="466"/>
        <end position="474"/>
    </location>
</feature>
<feature type="strand" evidence="10">
    <location>
        <begin position="492"/>
        <end position="498"/>
    </location>
</feature>
<feature type="strand" evidence="10">
    <location>
        <begin position="500"/>
        <end position="508"/>
    </location>
</feature>
<feature type="helix" evidence="10">
    <location>
        <begin position="511"/>
        <end position="513"/>
    </location>
</feature>
<feature type="helix" evidence="10">
    <location>
        <begin position="517"/>
        <end position="520"/>
    </location>
</feature>
<feature type="strand" evidence="10">
    <location>
        <begin position="529"/>
        <end position="531"/>
    </location>
</feature>
<feature type="turn" evidence="10">
    <location>
        <begin position="532"/>
        <end position="535"/>
    </location>
</feature>
<feature type="strand" evidence="10">
    <location>
        <begin position="536"/>
        <end position="538"/>
    </location>
</feature>
<feature type="helix" evidence="10">
    <location>
        <begin position="540"/>
        <end position="542"/>
    </location>
</feature>
<feature type="turn" evidence="10">
    <location>
        <begin position="544"/>
        <end position="547"/>
    </location>
</feature>
<feature type="strand" evidence="10">
    <location>
        <begin position="551"/>
        <end position="553"/>
    </location>
</feature>
<feature type="helix" evidence="10">
    <location>
        <begin position="557"/>
        <end position="561"/>
    </location>
</feature>
<feature type="strand" evidence="12">
    <location>
        <begin position="577"/>
        <end position="583"/>
    </location>
</feature>
<feature type="strand" evidence="12">
    <location>
        <begin position="592"/>
        <end position="596"/>
    </location>
</feature>
<feature type="turn" evidence="12">
    <location>
        <begin position="597"/>
        <end position="599"/>
    </location>
</feature>
<feature type="strand" evidence="12">
    <location>
        <begin position="600"/>
        <end position="603"/>
    </location>
</feature>
<feature type="strand" evidence="12">
    <location>
        <begin position="605"/>
        <end position="607"/>
    </location>
</feature>
<feature type="strand" evidence="12">
    <location>
        <begin position="610"/>
        <end position="614"/>
    </location>
</feature>
<feature type="turn" evidence="12">
    <location>
        <begin position="618"/>
        <end position="620"/>
    </location>
</feature>
<feature type="strand" evidence="12">
    <location>
        <begin position="630"/>
        <end position="639"/>
    </location>
</feature>
<feature type="turn" evidence="12">
    <location>
        <begin position="640"/>
        <end position="642"/>
    </location>
</feature>
<feature type="strand" evidence="12">
    <location>
        <begin position="645"/>
        <end position="654"/>
    </location>
</feature>
<feature type="helix" evidence="13">
    <location>
        <begin position="656"/>
        <end position="658"/>
    </location>
</feature>
<feature type="helix" evidence="13">
    <location>
        <begin position="662"/>
        <end position="666"/>
    </location>
</feature>
<feature type="strand" evidence="13">
    <location>
        <begin position="673"/>
        <end position="675"/>
    </location>
</feature>
<feature type="turn" evidence="13">
    <location>
        <begin position="676"/>
        <end position="679"/>
    </location>
</feature>
<feature type="strand" evidence="13">
    <location>
        <begin position="680"/>
        <end position="683"/>
    </location>
</feature>
<feature type="helix" evidence="13">
    <location>
        <begin position="685"/>
        <end position="687"/>
    </location>
</feature>
<feature type="strand" evidence="13">
    <location>
        <begin position="688"/>
        <end position="690"/>
    </location>
</feature>
<feature type="helix" evidence="13">
    <location>
        <begin position="691"/>
        <end position="693"/>
    </location>
</feature>
<feature type="helix" evidence="13">
    <location>
        <begin position="698"/>
        <end position="700"/>
    </location>
</feature>
<feature type="strand" evidence="13">
    <location>
        <begin position="710"/>
        <end position="713"/>
    </location>
</feature>
<feature type="strand" evidence="13">
    <location>
        <begin position="718"/>
        <end position="725"/>
    </location>
</feature>
<feature type="strand" evidence="13">
    <location>
        <begin position="737"/>
        <end position="743"/>
    </location>
</feature>
<feature type="strand" evidence="13">
    <location>
        <begin position="746"/>
        <end position="756"/>
    </location>
</feature>
<feature type="strand" evidence="13">
    <location>
        <begin position="759"/>
        <end position="765"/>
    </location>
</feature>
<feature type="strand" evidence="13">
    <location>
        <begin position="775"/>
        <end position="785"/>
    </location>
</feature>
<feature type="turn" evidence="13">
    <location>
        <begin position="786"/>
        <end position="788"/>
    </location>
</feature>
<feature type="strand" evidence="13">
    <location>
        <begin position="799"/>
        <end position="802"/>
    </location>
</feature>
<accession>P70207</accession>
<accession>Q6NVE6</accession>
<accession>Q6PHN4</accession>
<accession>Q80TZ7</accession>
<accession>Q8R1I4</accession>
<dbReference type="EMBL" id="D86949">
    <property type="protein sequence ID" value="BAA13189.1"/>
    <property type="status" value="ALT_INIT"/>
    <property type="molecule type" value="mRNA"/>
</dbReference>
<dbReference type="EMBL" id="BC024509">
    <property type="protein sequence ID" value="AAH24509.1"/>
    <property type="molecule type" value="mRNA"/>
</dbReference>
<dbReference type="EMBL" id="BC056475">
    <property type="protein sequence ID" value="AAH56475.1"/>
    <property type="molecule type" value="mRNA"/>
</dbReference>
<dbReference type="EMBL" id="BC068155">
    <property type="protein sequence ID" value="AAH68155.1"/>
    <property type="status" value="ALT_INIT"/>
    <property type="molecule type" value="mRNA"/>
</dbReference>
<dbReference type="EMBL" id="AK122289">
    <property type="protein sequence ID" value="BAC65571.1"/>
    <property type="molecule type" value="mRNA"/>
</dbReference>
<dbReference type="CCDS" id="CCDS35827.1"/>
<dbReference type="PIR" id="JC4975">
    <property type="entry name" value="JC4975"/>
</dbReference>
<dbReference type="RefSeq" id="NP_032908.2">
    <property type="nucleotide sequence ID" value="NM_008882.2"/>
</dbReference>
<dbReference type="PDB" id="3AL8">
    <property type="method" value="X-ray"/>
    <property type="resolution" value="3.60 A"/>
    <property type="chains" value="B=31-561"/>
</dbReference>
<dbReference type="PDB" id="3AL9">
    <property type="method" value="X-ray"/>
    <property type="resolution" value="2.10 A"/>
    <property type="chains" value="A/B=31-561"/>
</dbReference>
<dbReference type="PDB" id="3OKT">
    <property type="method" value="X-ray"/>
    <property type="resolution" value="2.30 A"/>
    <property type="chains" value="A=35-703"/>
</dbReference>
<dbReference type="PDB" id="3OKY">
    <property type="method" value="X-ray"/>
    <property type="resolution" value="2.20 A"/>
    <property type="chains" value="A=35-703"/>
</dbReference>
<dbReference type="PDB" id="4GZA">
    <property type="method" value="X-ray"/>
    <property type="resolution" value="7.00 A"/>
    <property type="chains" value="A/B/C/D/E/F=33-703"/>
</dbReference>
<dbReference type="PDB" id="5L5G">
    <property type="method" value="X-ray"/>
    <property type="resolution" value="10.00 A"/>
    <property type="chains" value="A/B/C/D=33-1231"/>
</dbReference>
<dbReference type="PDB" id="5L74">
    <property type="method" value="X-ray"/>
    <property type="resolution" value="1.36 A"/>
    <property type="chains" value="A=655-803"/>
</dbReference>
<dbReference type="PDBsum" id="3AL8"/>
<dbReference type="PDBsum" id="3AL9"/>
<dbReference type="PDBsum" id="3OKT"/>
<dbReference type="PDBsum" id="3OKY"/>
<dbReference type="PDBsum" id="4GZA"/>
<dbReference type="PDBsum" id="5L5G"/>
<dbReference type="PDBsum" id="5L74"/>
<dbReference type="SMR" id="P70207"/>
<dbReference type="BioGRID" id="202262">
    <property type="interactions" value="12"/>
</dbReference>
<dbReference type="DIP" id="DIP-32252N"/>
<dbReference type="FunCoup" id="P70207">
    <property type="interactions" value="545"/>
</dbReference>
<dbReference type="IntAct" id="P70207">
    <property type="interactions" value="2"/>
</dbReference>
<dbReference type="STRING" id="10090.ENSMUSP00000027952"/>
<dbReference type="GlyConnect" id="2590">
    <property type="glycosylation" value="6 N-Linked glycans (3 sites)"/>
</dbReference>
<dbReference type="GlyCosmos" id="P70207">
    <property type="glycosylation" value="10 sites, 6 glycans"/>
</dbReference>
<dbReference type="GlyGen" id="P70207">
    <property type="glycosylation" value="14 sites, 12 N-linked glycans (7 sites), 1 O-linked glycan (2 sites)"/>
</dbReference>
<dbReference type="iPTMnet" id="P70207"/>
<dbReference type="PhosphoSitePlus" id="P70207"/>
<dbReference type="SwissPalm" id="P70207"/>
<dbReference type="PaxDb" id="10090-ENSMUSP00000027952"/>
<dbReference type="PeptideAtlas" id="P70207"/>
<dbReference type="ProteomicsDB" id="289629"/>
<dbReference type="Pumba" id="P70207"/>
<dbReference type="Antibodypedia" id="4060">
    <property type="antibodies" value="188 antibodies from 27 providers"/>
</dbReference>
<dbReference type="DNASU" id="18845"/>
<dbReference type="Ensembl" id="ENSMUST00000027952.12">
    <property type="protein sequence ID" value="ENSMUSP00000027952.6"/>
    <property type="gene ID" value="ENSMUSG00000026640.13"/>
</dbReference>
<dbReference type="GeneID" id="18845"/>
<dbReference type="KEGG" id="mmu:18845"/>
<dbReference type="UCSC" id="uc007een.1">
    <property type="organism name" value="mouse"/>
</dbReference>
<dbReference type="AGR" id="MGI:107684"/>
<dbReference type="CTD" id="5362"/>
<dbReference type="MGI" id="MGI:107684">
    <property type="gene designation" value="Plxna2"/>
</dbReference>
<dbReference type="VEuPathDB" id="HostDB:ENSMUSG00000026640"/>
<dbReference type="eggNOG" id="KOG3610">
    <property type="taxonomic scope" value="Eukaryota"/>
</dbReference>
<dbReference type="GeneTree" id="ENSGT01050000244850"/>
<dbReference type="HOGENOM" id="CLU_001436_2_0_1"/>
<dbReference type="InParanoid" id="P70207"/>
<dbReference type="OMA" id="KYNEQLM"/>
<dbReference type="OrthoDB" id="125363at2759"/>
<dbReference type="PhylomeDB" id="P70207"/>
<dbReference type="TreeFam" id="TF312962"/>
<dbReference type="Reactome" id="R-MMU-399954">
    <property type="pathway name" value="Sema3A PAK dependent Axon repulsion"/>
</dbReference>
<dbReference type="Reactome" id="R-MMU-399955">
    <property type="pathway name" value="SEMA3A-Plexin repulsion signaling by inhibiting Integrin adhesion"/>
</dbReference>
<dbReference type="Reactome" id="R-MMU-399956">
    <property type="pathway name" value="CRMPs in Sema3A signaling"/>
</dbReference>
<dbReference type="BioGRID-ORCS" id="18845">
    <property type="hits" value="1 hit in 76 CRISPR screens"/>
</dbReference>
<dbReference type="ChiTaRS" id="Plxna2">
    <property type="organism name" value="mouse"/>
</dbReference>
<dbReference type="EvolutionaryTrace" id="P70207"/>
<dbReference type="PRO" id="PR:P70207"/>
<dbReference type="Proteomes" id="UP000000589">
    <property type="component" value="Chromosome 1"/>
</dbReference>
<dbReference type="RNAct" id="P70207">
    <property type="molecule type" value="protein"/>
</dbReference>
<dbReference type="Bgee" id="ENSMUSG00000026640">
    <property type="expression patterns" value="Expressed in ganglionic eminence and 281 other cell types or tissues"/>
</dbReference>
<dbReference type="ExpressionAtlas" id="P70207">
    <property type="expression patterns" value="baseline and differential"/>
</dbReference>
<dbReference type="GO" id="GO:0062023">
    <property type="term" value="C:collagen-containing extracellular matrix"/>
    <property type="evidence" value="ECO:0007005"/>
    <property type="project" value="BHF-UCL"/>
</dbReference>
<dbReference type="GO" id="GO:0005886">
    <property type="term" value="C:plasma membrane"/>
    <property type="evidence" value="ECO:0000314"/>
    <property type="project" value="UniProtKB"/>
</dbReference>
<dbReference type="GO" id="GO:0042802">
    <property type="term" value="F:identical protein binding"/>
    <property type="evidence" value="ECO:0000353"/>
    <property type="project" value="IntAct"/>
</dbReference>
<dbReference type="GO" id="GO:0017154">
    <property type="term" value="F:semaphorin receptor activity"/>
    <property type="evidence" value="ECO:0000315"/>
    <property type="project" value="UniProtKB"/>
</dbReference>
<dbReference type="GO" id="GO:0007166">
    <property type="term" value="P:cell surface receptor signaling pathway"/>
    <property type="evidence" value="ECO:0000314"/>
    <property type="project" value="MGI"/>
</dbReference>
<dbReference type="GO" id="GO:0051642">
    <property type="term" value="P:centrosome localization"/>
    <property type="evidence" value="ECO:0000315"/>
    <property type="project" value="MGI"/>
</dbReference>
<dbReference type="GO" id="GO:0021935">
    <property type="term" value="P:cerebellar granule cell precursor tangential migration"/>
    <property type="evidence" value="ECO:0000315"/>
    <property type="project" value="MGI"/>
</dbReference>
<dbReference type="GO" id="GO:0060174">
    <property type="term" value="P:limb bud formation"/>
    <property type="evidence" value="ECO:0000270"/>
    <property type="project" value="BHF-UCL"/>
</dbReference>
<dbReference type="GO" id="GO:0021915">
    <property type="term" value="P:neural tube development"/>
    <property type="evidence" value="ECO:0000270"/>
    <property type="project" value="BHF-UCL"/>
</dbReference>
<dbReference type="GO" id="GO:0060037">
    <property type="term" value="P:pharyngeal system development"/>
    <property type="evidence" value="ECO:0000270"/>
    <property type="project" value="BHF-UCL"/>
</dbReference>
<dbReference type="GO" id="GO:0030334">
    <property type="term" value="P:regulation of cell migration"/>
    <property type="evidence" value="ECO:0000315"/>
    <property type="project" value="UniProtKB"/>
</dbReference>
<dbReference type="GO" id="GO:0071526">
    <property type="term" value="P:semaphorin-plexin signaling pathway"/>
    <property type="evidence" value="ECO:0000315"/>
    <property type="project" value="UniProtKB"/>
</dbReference>
<dbReference type="GO" id="GO:0001756">
    <property type="term" value="P:somitogenesis"/>
    <property type="evidence" value="ECO:0000270"/>
    <property type="project" value="BHF-UCL"/>
</dbReference>
<dbReference type="CDD" id="cd00603">
    <property type="entry name" value="IPT_PCSR"/>
    <property type="match status" value="1"/>
</dbReference>
<dbReference type="CDD" id="cd01180">
    <property type="entry name" value="IPT_plexin_repeat1"/>
    <property type="match status" value="1"/>
</dbReference>
<dbReference type="CDD" id="cd01179">
    <property type="entry name" value="IPT_plexin_repeat2"/>
    <property type="match status" value="1"/>
</dbReference>
<dbReference type="CDD" id="cd01181">
    <property type="entry name" value="IPT_plexin_repeat3"/>
    <property type="match status" value="1"/>
</dbReference>
<dbReference type="CDD" id="cd12790">
    <property type="entry name" value="RasGAP_plexin_A"/>
    <property type="match status" value="1"/>
</dbReference>
<dbReference type="CDD" id="cd11272">
    <property type="entry name" value="Sema_plexin_A2"/>
    <property type="match status" value="1"/>
</dbReference>
<dbReference type="FunFam" id="1.10.506.10:FF:000005">
    <property type="entry name" value="Plexin A1"/>
    <property type="match status" value="1"/>
</dbReference>
<dbReference type="FunFam" id="1.10.506.10:FF:000006">
    <property type="entry name" value="Plexin A1"/>
    <property type="match status" value="1"/>
</dbReference>
<dbReference type="FunFam" id="2.60.40.10:FF:000123">
    <property type="entry name" value="Plexin A1"/>
    <property type="match status" value="1"/>
</dbReference>
<dbReference type="FunFam" id="2.130.10.10:FF:000006">
    <property type="entry name" value="Plexin A2"/>
    <property type="match status" value="1"/>
</dbReference>
<dbReference type="FunFam" id="2.60.40.10:FF:000071">
    <property type="entry name" value="Plexin A2"/>
    <property type="match status" value="1"/>
</dbReference>
<dbReference type="FunFam" id="2.60.40.10:FF:000131">
    <property type="entry name" value="Plexin A2"/>
    <property type="match status" value="1"/>
</dbReference>
<dbReference type="FunFam" id="2.60.40.10:FF:000339">
    <property type="entry name" value="Plexin A2"/>
    <property type="match status" value="1"/>
</dbReference>
<dbReference type="FunFam" id="2.60.40.10:FF:000695">
    <property type="entry name" value="Plexin A2"/>
    <property type="match status" value="1"/>
</dbReference>
<dbReference type="FunFam" id="3.10.20.90:FF:000018">
    <property type="entry name" value="Plexin A2"/>
    <property type="match status" value="1"/>
</dbReference>
<dbReference type="FunFam" id="3.30.1680.10:FF:000032">
    <property type="entry name" value="Plexin A2"/>
    <property type="match status" value="1"/>
</dbReference>
<dbReference type="FunFam" id="2.60.40.10:FF:001973">
    <property type="entry name" value="Plexin A4, B"/>
    <property type="match status" value="1"/>
</dbReference>
<dbReference type="Gene3D" id="1.10.506.10">
    <property type="entry name" value="GTPase Activation - p120gap, domain 1"/>
    <property type="match status" value="1"/>
</dbReference>
<dbReference type="Gene3D" id="2.60.40.10">
    <property type="entry name" value="Immunoglobulins"/>
    <property type="match status" value="6"/>
</dbReference>
<dbReference type="Gene3D" id="3.10.20.90">
    <property type="entry name" value="Phosphatidylinositol 3-kinase Catalytic Subunit, Chain A, domain 1"/>
    <property type="match status" value="1"/>
</dbReference>
<dbReference type="Gene3D" id="2.130.10.10">
    <property type="entry name" value="YVTN repeat-like/Quinoprotein amine dehydrogenase"/>
    <property type="match status" value="1"/>
</dbReference>
<dbReference type="InterPro" id="IPR013783">
    <property type="entry name" value="Ig-like_fold"/>
</dbReference>
<dbReference type="InterPro" id="IPR014756">
    <property type="entry name" value="Ig_E-set"/>
</dbReference>
<dbReference type="InterPro" id="IPR002909">
    <property type="entry name" value="IPT_dom"/>
</dbReference>
<dbReference type="InterPro" id="IPR031148">
    <property type="entry name" value="Plexin"/>
</dbReference>
<dbReference type="InterPro" id="IPR042826">
    <property type="entry name" value="Plexin-A2_sema"/>
</dbReference>
<dbReference type="InterPro" id="IPR013548">
    <property type="entry name" value="Plexin_cytoplasmic_RasGAP_dom"/>
</dbReference>
<dbReference type="InterPro" id="IPR046800">
    <property type="entry name" value="Plexin_RBD"/>
</dbReference>
<dbReference type="InterPro" id="IPR002165">
    <property type="entry name" value="Plexin_repeat"/>
</dbReference>
<dbReference type="InterPro" id="IPR016201">
    <property type="entry name" value="PSI"/>
</dbReference>
<dbReference type="InterPro" id="IPR008936">
    <property type="entry name" value="Rho_GTPase_activation_prot"/>
</dbReference>
<dbReference type="InterPro" id="IPR001627">
    <property type="entry name" value="Semap_dom"/>
</dbReference>
<dbReference type="InterPro" id="IPR036352">
    <property type="entry name" value="Semap_dom_sf"/>
</dbReference>
<dbReference type="InterPro" id="IPR041019">
    <property type="entry name" value="TIG1_plexin"/>
</dbReference>
<dbReference type="InterPro" id="IPR041362">
    <property type="entry name" value="TIG2_plexin"/>
</dbReference>
<dbReference type="InterPro" id="IPR015943">
    <property type="entry name" value="WD40/YVTN_repeat-like_dom_sf"/>
</dbReference>
<dbReference type="PANTHER" id="PTHR22625">
    <property type="entry name" value="PLEXIN"/>
    <property type="match status" value="1"/>
</dbReference>
<dbReference type="PANTHER" id="PTHR22625:SF37">
    <property type="entry name" value="PLEXIN-A2"/>
    <property type="match status" value="1"/>
</dbReference>
<dbReference type="Pfam" id="PF08337">
    <property type="entry name" value="Plexin_cytopl"/>
    <property type="match status" value="1"/>
</dbReference>
<dbReference type="Pfam" id="PF20170">
    <property type="entry name" value="Plexin_RBD"/>
    <property type="match status" value="1"/>
</dbReference>
<dbReference type="Pfam" id="PF01437">
    <property type="entry name" value="PSI"/>
    <property type="match status" value="2"/>
</dbReference>
<dbReference type="Pfam" id="PF24479">
    <property type="entry name" value="PSI_PlexinA-B"/>
    <property type="match status" value="1"/>
</dbReference>
<dbReference type="Pfam" id="PF01403">
    <property type="entry name" value="Sema"/>
    <property type="match status" value="1"/>
</dbReference>
<dbReference type="Pfam" id="PF01833">
    <property type="entry name" value="TIG"/>
    <property type="match status" value="4"/>
</dbReference>
<dbReference type="Pfam" id="PF18020">
    <property type="entry name" value="TIG_2"/>
    <property type="match status" value="1"/>
</dbReference>
<dbReference type="Pfam" id="PF17960">
    <property type="entry name" value="TIG_plexin"/>
    <property type="match status" value="1"/>
</dbReference>
<dbReference type="SMART" id="SM00429">
    <property type="entry name" value="IPT"/>
    <property type="match status" value="4"/>
</dbReference>
<dbReference type="SMART" id="SM00423">
    <property type="entry name" value="PSI"/>
    <property type="match status" value="3"/>
</dbReference>
<dbReference type="SMART" id="SM00630">
    <property type="entry name" value="Sema"/>
    <property type="match status" value="1"/>
</dbReference>
<dbReference type="SUPFAM" id="SSF81296">
    <property type="entry name" value="E set domains"/>
    <property type="match status" value="4"/>
</dbReference>
<dbReference type="SUPFAM" id="SSF48350">
    <property type="entry name" value="GTPase activation domain, GAP"/>
    <property type="match status" value="1"/>
</dbReference>
<dbReference type="SUPFAM" id="SSF103575">
    <property type="entry name" value="Plexin repeat"/>
    <property type="match status" value="2"/>
</dbReference>
<dbReference type="SUPFAM" id="SSF101912">
    <property type="entry name" value="Sema domain"/>
    <property type="match status" value="1"/>
</dbReference>
<dbReference type="PROSITE" id="PS51004">
    <property type="entry name" value="SEMA"/>
    <property type="match status" value="1"/>
</dbReference>